<sequence>MSVPFDPASYDRQLEEKTVRLRELLAPFDAPEPQVFDSPREHYRLRAEFRLWREDQKRYYAMFAPGDNRTPILLEGLPIASERINALMPVLRERWEASPTLNHKLFQVDFLTTLAGDAMITLCYHRPLDAEWQAAAAQLAAELDVSLIGRSKGQKLVIGHDYVTEKLDVAGRTFSYRQPEGAFTQPNGTVNGKMLNWAFDALGERQDDLLELYCGNGNFTLPLATRVRKVLATEISKTSVNAALSNLDDNGVDNVTLVRLSAEELTEALNEVRPFRRLHGVDLKSYDFGSVFVDPPRAGMDPDTCELTRRFERILYISCNPETLAANIAQLHDTHRVERCALFDQFPYTHHMESGVLLVRR</sequence>
<reference key="1">
    <citation type="journal article" date="2005" name="Proc. Natl. Acad. Sci. U.S.A.">
        <title>Comparison of the complete genome sequences of Pseudomonas syringae pv. syringae B728a and pv. tomato DC3000.</title>
        <authorList>
            <person name="Feil H."/>
            <person name="Feil W.S."/>
            <person name="Chain P."/>
            <person name="Larimer F."/>
            <person name="Dibartolo G."/>
            <person name="Copeland A."/>
            <person name="Lykidis A."/>
            <person name="Trong S."/>
            <person name="Nolan M."/>
            <person name="Goltsman E."/>
            <person name="Thiel J."/>
            <person name="Malfatti S."/>
            <person name="Loper J.E."/>
            <person name="Lapidus A."/>
            <person name="Detter J.C."/>
            <person name="Land M."/>
            <person name="Richardson P.M."/>
            <person name="Kyrpides N.C."/>
            <person name="Ivanova N."/>
            <person name="Lindow S.E."/>
        </authorList>
    </citation>
    <scope>NUCLEOTIDE SEQUENCE [LARGE SCALE GENOMIC DNA]</scope>
    <source>
        <strain>B728a</strain>
    </source>
</reference>
<dbReference type="EC" id="2.1.1.-" evidence="1"/>
<dbReference type="EC" id="2.1.1.35" evidence="1"/>
<dbReference type="EMBL" id="CP000075">
    <property type="protein sequence ID" value="AAY39317.1"/>
    <property type="molecule type" value="Genomic_DNA"/>
</dbReference>
<dbReference type="RefSeq" id="WP_011268939.1">
    <property type="nucleotide sequence ID" value="NC_007005.1"/>
</dbReference>
<dbReference type="RefSeq" id="YP_237355.1">
    <property type="nucleotide sequence ID" value="NC_007005.1"/>
</dbReference>
<dbReference type="SMR" id="Q4ZNF5"/>
<dbReference type="STRING" id="205918.Psyr_4287"/>
<dbReference type="KEGG" id="psb:Psyr_4287"/>
<dbReference type="PATRIC" id="fig|205918.7.peg.4424"/>
<dbReference type="eggNOG" id="COG2265">
    <property type="taxonomic scope" value="Bacteria"/>
</dbReference>
<dbReference type="HOGENOM" id="CLU_043022_0_0_6"/>
<dbReference type="OrthoDB" id="9804590at2"/>
<dbReference type="Proteomes" id="UP000000426">
    <property type="component" value="Chromosome"/>
</dbReference>
<dbReference type="GO" id="GO:0005829">
    <property type="term" value="C:cytosol"/>
    <property type="evidence" value="ECO:0007669"/>
    <property type="project" value="TreeGrafter"/>
</dbReference>
<dbReference type="GO" id="GO:0019843">
    <property type="term" value="F:rRNA binding"/>
    <property type="evidence" value="ECO:0007669"/>
    <property type="project" value="TreeGrafter"/>
</dbReference>
<dbReference type="GO" id="GO:0030697">
    <property type="term" value="F:tRNA (uracil(54)-C5)-methyltransferase activity, S-adenosyl methionine-dependent"/>
    <property type="evidence" value="ECO:0007669"/>
    <property type="project" value="UniProtKB-UniRule"/>
</dbReference>
<dbReference type="GO" id="GO:0000049">
    <property type="term" value="F:tRNA binding"/>
    <property type="evidence" value="ECO:0007669"/>
    <property type="project" value="TreeGrafter"/>
</dbReference>
<dbReference type="GO" id="GO:0030488">
    <property type="term" value="P:tRNA methylation"/>
    <property type="evidence" value="ECO:0007669"/>
    <property type="project" value="UniProtKB-UniRule"/>
</dbReference>
<dbReference type="CDD" id="cd02440">
    <property type="entry name" value="AdoMet_MTases"/>
    <property type="match status" value="1"/>
</dbReference>
<dbReference type="FunFam" id="2.40.50.1070:FF:000001">
    <property type="entry name" value="tRNA/tmRNA (uracil-C(5))-methyltransferase"/>
    <property type="match status" value="1"/>
</dbReference>
<dbReference type="FunFam" id="3.40.50.150:FF:000012">
    <property type="entry name" value="tRNA/tmRNA (uracil-C(5))-methyltransferase"/>
    <property type="match status" value="1"/>
</dbReference>
<dbReference type="Gene3D" id="2.40.50.1070">
    <property type="match status" value="1"/>
</dbReference>
<dbReference type="Gene3D" id="3.40.50.150">
    <property type="entry name" value="Vaccinia Virus protein VP39"/>
    <property type="match status" value="1"/>
</dbReference>
<dbReference type="HAMAP" id="MF_01011">
    <property type="entry name" value="RNA_methyltr_TrmA"/>
    <property type="match status" value="1"/>
</dbReference>
<dbReference type="InterPro" id="IPR030390">
    <property type="entry name" value="MeTrfase_TrmA_AS"/>
</dbReference>
<dbReference type="InterPro" id="IPR030391">
    <property type="entry name" value="MeTrfase_TrmA_CS"/>
</dbReference>
<dbReference type="InterPro" id="IPR029063">
    <property type="entry name" value="SAM-dependent_MTases_sf"/>
</dbReference>
<dbReference type="InterPro" id="IPR011869">
    <property type="entry name" value="TrmA_MeTrfase"/>
</dbReference>
<dbReference type="InterPro" id="IPR010280">
    <property type="entry name" value="U5_MeTrfase_fam"/>
</dbReference>
<dbReference type="NCBIfam" id="TIGR02143">
    <property type="entry name" value="trmA_only"/>
    <property type="match status" value="1"/>
</dbReference>
<dbReference type="PANTHER" id="PTHR47790">
    <property type="entry name" value="TRNA/TMRNA (URACIL-C(5))-METHYLTRANSFERASE"/>
    <property type="match status" value="1"/>
</dbReference>
<dbReference type="PANTHER" id="PTHR47790:SF2">
    <property type="entry name" value="TRNA_TMRNA (URACIL-C(5))-METHYLTRANSFERASE"/>
    <property type="match status" value="1"/>
</dbReference>
<dbReference type="Pfam" id="PF05958">
    <property type="entry name" value="tRNA_U5-meth_tr"/>
    <property type="match status" value="1"/>
</dbReference>
<dbReference type="SUPFAM" id="SSF53335">
    <property type="entry name" value="S-adenosyl-L-methionine-dependent methyltransferases"/>
    <property type="match status" value="1"/>
</dbReference>
<dbReference type="PROSITE" id="PS51687">
    <property type="entry name" value="SAM_MT_RNA_M5U"/>
    <property type="match status" value="1"/>
</dbReference>
<dbReference type="PROSITE" id="PS01230">
    <property type="entry name" value="TRMA_1"/>
    <property type="match status" value="1"/>
</dbReference>
<dbReference type="PROSITE" id="PS01231">
    <property type="entry name" value="TRMA_2"/>
    <property type="match status" value="1"/>
</dbReference>
<protein>
    <recommendedName>
        <fullName evidence="1">tRNA/tmRNA (uracil-C(5))-methyltransferase</fullName>
        <ecNumber evidence="1">2.1.1.-</ecNumber>
        <ecNumber evidence="1">2.1.1.35</ecNumber>
    </recommendedName>
    <alternativeName>
        <fullName evidence="1">tRNA (uracil(54)-C(5))-methyltransferase</fullName>
    </alternativeName>
    <alternativeName>
        <fullName evidence="1">tRNA(m5U54)-methyltransferase</fullName>
        <shortName evidence="1">RUMT</shortName>
    </alternativeName>
    <alternativeName>
        <fullName evidence="1">tmRNA (uracil(341)-C(5))-methyltransferase</fullName>
    </alternativeName>
</protein>
<proteinExistence type="inferred from homology"/>
<gene>
    <name evidence="1" type="primary">trmA</name>
    <name type="ordered locus">Psyr_4287</name>
</gene>
<keyword id="KW-0489">Methyltransferase</keyword>
<keyword id="KW-0949">S-adenosyl-L-methionine</keyword>
<keyword id="KW-0808">Transferase</keyword>
<keyword id="KW-0819">tRNA processing</keyword>
<evidence type="ECO:0000255" key="1">
    <source>
        <dbReference type="HAMAP-Rule" id="MF_01011"/>
    </source>
</evidence>
<organism>
    <name type="scientific">Pseudomonas syringae pv. syringae (strain B728a)</name>
    <dbReference type="NCBI Taxonomy" id="205918"/>
    <lineage>
        <taxon>Bacteria</taxon>
        <taxon>Pseudomonadati</taxon>
        <taxon>Pseudomonadota</taxon>
        <taxon>Gammaproteobacteria</taxon>
        <taxon>Pseudomonadales</taxon>
        <taxon>Pseudomonadaceae</taxon>
        <taxon>Pseudomonas</taxon>
        <taxon>Pseudomonas syringae</taxon>
    </lineage>
</organism>
<comment type="function">
    <text evidence="1">Dual-specificity methyltransferase that catalyzes the formation of 5-methyluridine at position 54 (m5U54) in all tRNAs, and that of position 341 (m5U341) in tmRNA (transfer-mRNA).</text>
</comment>
<comment type="catalytic activity">
    <reaction evidence="1">
        <text>uridine(54) in tRNA + S-adenosyl-L-methionine = 5-methyluridine(54) in tRNA + S-adenosyl-L-homocysteine + H(+)</text>
        <dbReference type="Rhea" id="RHEA:42712"/>
        <dbReference type="Rhea" id="RHEA-COMP:10167"/>
        <dbReference type="Rhea" id="RHEA-COMP:10193"/>
        <dbReference type="ChEBI" id="CHEBI:15378"/>
        <dbReference type="ChEBI" id="CHEBI:57856"/>
        <dbReference type="ChEBI" id="CHEBI:59789"/>
        <dbReference type="ChEBI" id="CHEBI:65315"/>
        <dbReference type="ChEBI" id="CHEBI:74447"/>
        <dbReference type="EC" id="2.1.1.35"/>
    </reaction>
</comment>
<comment type="catalytic activity">
    <reaction evidence="1">
        <text>uridine(341) in tmRNA + S-adenosyl-L-methionine = 5-methyluridine(341) in tmRNA + S-adenosyl-L-homocysteine + H(+)</text>
        <dbReference type="Rhea" id="RHEA:43612"/>
        <dbReference type="Rhea" id="RHEA-COMP:10630"/>
        <dbReference type="Rhea" id="RHEA-COMP:10631"/>
        <dbReference type="ChEBI" id="CHEBI:15378"/>
        <dbReference type="ChEBI" id="CHEBI:57856"/>
        <dbReference type="ChEBI" id="CHEBI:59789"/>
        <dbReference type="ChEBI" id="CHEBI:65315"/>
        <dbReference type="ChEBI" id="CHEBI:74447"/>
    </reaction>
</comment>
<comment type="similarity">
    <text evidence="1">Belongs to the class I-like SAM-binding methyltransferase superfamily. RNA M5U methyltransferase family. TrmA subfamily.</text>
</comment>
<accession>Q4ZNF5</accession>
<feature type="chain" id="PRO_0000281455" description="tRNA/tmRNA (uracil-C(5))-methyltransferase">
    <location>
        <begin position="1"/>
        <end position="361"/>
    </location>
</feature>
<feature type="active site" description="Nucleophile" evidence="1">
    <location>
        <position position="319"/>
    </location>
</feature>
<feature type="active site" description="Proton acceptor" evidence="1">
    <location>
        <position position="353"/>
    </location>
</feature>
<feature type="binding site" evidence="1">
    <location>
        <position position="185"/>
    </location>
    <ligand>
        <name>S-adenosyl-L-methionine</name>
        <dbReference type="ChEBI" id="CHEBI:59789"/>
    </ligand>
</feature>
<feature type="binding site" evidence="1">
    <location>
        <position position="213"/>
    </location>
    <ligand>
        <name>S-adenosyl-L-methionine</name>
        <dbReference type="ChEBI" id="CHEBI:59789"/>
    </ligand>
</feature>
<feature type="binding site" evidence="1">
    <location>
        <position position="218"/>
    </location>
    <ligand>
        <name>S-adenosyl-L-methionine</name>
        <dbReference type="ChEBI" id="CHEBI:59789"/>
    </ligand>
</feature>
<feature type="binding site" evidence="1">
    <location>
        <position position="234"/>
    </location>
    <ligand>
        <name>S-adenosyl-L-methionine</name>
        <dbReference type="ChEBI" id="CHEBI:59789"/>
    </ligand>
</feature>
<feature type="binding site" evidence="1">
    <location>
        <position position="294"/>
    </location>
    <ligand>
        <name>S-adenosyl-L-methionine</name>
        <dbReference type="ChEBI" id="CHEBI:59789"/>
    </ligand>
</feature>
<name>TRMA_PSEU2</name>